<evidence type="ECO:0000250" key="1">
    <source>
        <dbReference type="UniProtKB" id="Q9H936"/>
    </source>
</evidence>
<evidence type="ECO:0000255" key="2"/>
<evidence type="ECO:0000255" key="3">
    <source>
        <dbReference type="PROSITE-ProRule" id="PRU00282"/>
    </source>
</evidence>
<evidence type="ECO:0000269" key="4">
    <source>
    </source>
</evidence>
<evidence type="ECO:0000303" key="5">
    <source>
    </source>
</evidence>
<evidence type="ECO:0000305" key="6"/>
<evidence type="ECO:0000305" key="7">
    <source>
    </source>
</evidence>
<evidence type="ECO:0000312" key="8">
    <source>
        <dbReference type="RGD" id="1307826"/>
    </source>
</evidence>
<gene>
    <name evidence="8" type="primary">Slc25a22</name>
    <name evidence="5" type="synonym">Gc1</name>
</gene>
<accession>A0A0G2K5L2</accession>
<accession>D3ZRF5</accession>
<accession>Q5FVG4</accession>
<feature type="chain" id="PRO_0000455802" description="Mitochondrial glutamate carrier 1">
    <location>
        <begin position="1"/>
        <end position="323"/>
    </location>
</feature>
<feature type="transmembrane region" description="Helical; Name=1" evidence="2">
    <location>
        <begin position="12"/>
        <end position="32"/>
    </location>
</feature>
<feature type="transmembrane region" description="Helical; Name=2" evidence="2">
    <location>
        <begin position="62"/>
        <end position="82"/>
    </location>
</feature>
<feature type="transmembrane region" description="Helical; Name=3" evidence="2">
    <location>
        <begin position="107"/>
        <end position="127"/>
    </location>
</feature>
<feature type="transmembrane region" description="Helical; Name=4" evidence="2">
    <location>
        <begin position="189"/>
        <end position="209"/>
    </location>
</feature>
<feature type="transmembrane region" description="Helical; Name=5" evidence="2">
    <location>
        <begin position="223"/>
        <end position="243"/>
    </location>
</feature>
<feature type="transmembrane region" description="Helical; Name=6" evidence="2">
    <location>
        <begin position="292"/>
        <end position="312"/>
    </location>
</feature>
<feature type="repeat" description="Solcar 1" evidence="3">
    <location>
        <begin position="6"/>
        <end position="93"/>
    </location>
</feature>
<feature type="repeat" description="Solcar 2" evidence="3">
    <location>
        <begin position="101"/>
        <end position="214"/>
    </location>
</feature>
<feature type="repeat" description="Solcar 3" evidence="3">
    <location>
        <begin position="223"/>
        <end position="312"/>
    </location>
</feature>
<feature type="splice variant" id="VSP_061529" description="In isoform 2.">
    <location>
        <begin position="138"/>
        <end position="231"/>
    </location>
</feature>
<comment type="function">
    <text evidence="1 4 7">Mitochondrial glutamate/H(+) symporter (By similarity). Responsible for the transport of glutamate from the cytosol into the mitochondrial matrix with the concomitant import of a proton (Probable). Plays a role in the control of glucose-stimulated insulin secretion (PubMed:19584051).</text>
</comment>
<comment type="catalytic activity">
    <reaction evidence="7">
        <text>L-glutamate(in) + H(+)(in) = L-glutamate(out) + H(+)(out)</text>
        <dbReference type="Rhea" id="RHEA:70955"/>
        <dbReference type="ChEBI" id="CHEBI:15378"/>
        <dbReference type="ChEBI" id="CHEBI:29985"/>
    </reaction>
</comment>
<comment type="subcellular location">
    <subcellularLocation>
        <location evidence="4">Mitochondrion inner membrane</location>
        <topology evidence="2">Multi-pass membrane protein</topology>
    </subcellularLocation>
</comment>
<comment type="alternative products">
    <event type="alternative splicing"/>
    <isoform>
        <id>A0A0G2K5L2-1</id>
        <name>1</name>
        <sequence type="displayed"/>
    </isoform>
    <isoform>
        <id>A0A0G2K5L2-2</id>
        <name>2</name>
        <sequence type="described" ref="VSP_061529"/>
    </isoform>
</comment>
<comment type="tissue specificity">
    <text evidence="4">Detected in insulin-secreting beta-cells and pancreatic islets (at the protein level).</text>
</comment>
<comment type="similarity">
    <text evidence="6">Belongs to the mitochondrial carrier (TC 2.A.29) family.</text>
</comment>
<reference key="1">
    <citation type="journal article" date="2004" name="Nature">
        <title>Genome sequence of the Brown Norway rat yields insights into mammalian evolution.</title>
        <authorList>
            <person name="Gibbs R.A."/>
            <person name="Weinstock G.M."/>
            <person name="Metzker M.L."/>
            <person name="Muzny D.M."/>
            <person name="Sodergren E.J."/>
            <person name="Scherer S."/>
            <person name="Scott G."/>
            <person name="Steffen D."/>
            <person name="Worley K.C."/>
            <person name="Burch P.E."/>
            <person name="Okwuonu G."/>
            <person name="Hines S."/>
            <person name="Lewis L."/>
            <person name="Deramo C."/>
            <person name="Delgado O."/>
            <person name="Dugan-Rocha S."/>
            <person name="Miner G."/>
            <person name="Morgan M."/>
            <person name="Hawes A."/>
            <person name="Gill R."/>
            <person name="Holt R.A."/>
            <person name="Adams M.D."/>
            <person name="Amanatides P.G."/>
            <person name="Baden-Tillson H."/>
            <person name="Barnstead M."/>
            <person name="Chin S."/>
            <person name="Evans C.A."/>
            <person name="Ferriera S."/>
            <person name="Fosler C."/>
            <person name="Glodek A."/>
            <person name="Gu Z."/>
            <person name="Jennings D."/>
            <person name="Kraft C.L."/>
            <person name="Nguyen T."/>
            <person name="Pfannkoch C.M."/>
            <person name="Sitter C."/>
            <person name="Sutton G.G."/>
            <person name="Venter J.C."/>
            <person name="Woodage T."/>
            <person name="Smith D."/>
            <person name="Lee H.-M."/>
            <person name="Gustafson E."/>
            <person name="Cahill P."/>
            <person name="Kana A."/>
            <person name="Doucette-Stamm L."/>
            <person name="Weinstock K."/>
            <person name="Fechtel K."/>
            <person name="Weiss R.B."/>
            <person name="Dunn D.M."/>
            <person name="Green E.D."/>
            <person name="Blakesley R.W."/>
            <person name="Bouffard G.G."/>
            <person name="De Jong P.J."/>
            <person name="Osoegawa K."/>
            <person name="Zhu B."/>
            <person name="Marra M."/>
            <person name="Schein J."/>
            <person name="Bosdet I."/>
            <person name="Fjell C."/>
            <person name="Jones S."/>
            <person name="Krzywinski M."/>
            <person name="Mathewson C."/>
            <person name="Siddiqui A."/>
            <person name="Wye N."/>
            <person name="McPherson J."/>
            <person name="Zhao S."/>
            <person name="Fraser C.M."/>
            <person name="Shetty J."/>
            <person name="Shatsman S."/>
            <person name="Geer K."/>
            <person name="Chen Y."/>
            <person name="Abramzon S."/>
            <person name="Nierman W.C."/>
            <person name="Havlak P.H."/>
            <person name="Chen R."/>
            <person name="Durbin K.J."/>
            <person name="Egan A."/>
            <person name="Ren Y."/>
            <person name="Song X.-Z."/>
            <person name="Li B."/>
            <person name="Liu Y."/>
            <person name="Qin X."/>
            <person name="Cawley S."/>
            <person name="Cooney A.J."/>
            <person name="D'Souza L.M."/>
            <person name="Martin K."/>
            <person name="Wu J.Q."/>
            <person name="Gonzalez-Garay M.L."/>
            <person name="Jackson A.R."/>
            <person name="Kalafus K.J."/>
            <person name="McLeod M.P."/>
            <person name="Milosavljevic A."/>
            <person name="Virk D."/>
            <person name="Volkov A."/>
            <person name="Wheeler D.A."/>
            <person name="Zhang Z."/>
            <person name="Bailey J.A."/>
            <person name="Eichler E.E."/>
            <person name="Tuzun E."/>
            <person name="Birney E."/>
            <person name="Mongin E."/>
            <person name="Ureta-Vidal A."/>
            <person name="Woodwark C."/>
            <person name="Zdobnov E."/>
            <person name="Bork P."/>
            <person name="Suyama M."/>
            <person name="Torrents D."/>
            <person name="Alexandersson M."/>
            <person name="Trask B.J."/>
            <person name="Young J.M."/>
            <person name="Huang H."/>
            <person name="Wang H."/>
            <person name="Xing H."/>
            <person name="Daniels S."/>
            <person name="Gietzen D."/>
            <person name="Schmidt J."/>
            <person name="Stevens K."/>
            <person name="Vitt U."/>
            <person name="Wingrove J."/>
            <person name="Camara F."/>
            <person name="Mar Alba M."/>
            <person name="Abril J.F."/>
            <person name="Guigo R."/>
            <person name="Smit A."/>
            <person name="Dubchak I."/>
            <person name="Rubin E.M."/>
            <person name="Couronne O."/>
            <person name="Poliakov A."/>
            <person name="Huebner N."/>
            <person name="Ganten D."/>
            <person name="Goesele C."/>
            <person name="Hummel O."/>
            <person name="Kreitler T."/>
            <person name="Lee Y.-A."/>
            <person name="Monti J."/>
            <person name="Schulz H."/>
            <person name="Zimdahl H."/>
            <person name="Himmelbauer H."/>
            <person name="Lehrach H."/>
            <person name="Jacob H.J."/>
            <person name="Bromberg S."/>
            <person name="Gullings-Handley J."/>
            <person name="Jensen-Seaman M.I."/>
            <person name="Kwitek A.E."/>
            <person name="Lazar J."/>
            <person name="Pasko D."/>
            <person name="Tonellato P.J."/>
            <person name="Twigger S."/>
            <person name="Ponting C.P."/>
            <person name="Duarte J.M."/>
            <person name="Rice S."/>
            <person name="Goodstadt L."/>
            <person name="Beatson S.A."/>
            <person name="Emes R.D."/>
            <person name="Winter E.E."/>
            <person name="Webber C."/>
            <person name="Brandt P."/>
            <person name="Nyakatura G."/>
            <person name="Adetobi M."/>
            <person name="Chiaromonte F."/>
            <person name="Elnitski L."/>
            <person name="Eswara P."/>
            <person name="Hardison R.C."/>
            <person name="Hou M."/>
            <person name="Kolbe D."/>
            <person name="Makova K."/>
            <person name="Miller W."/>
            <person name="Nekrutenko A."/>
            <person name="Riemer C."/>
            <person name="Schwartz S."/>
            <person name="Taylor J."/>
            <person name="Yang S."/>
            <person name="Zhang Y."/>
            <person name="Lindpaintner K."/>
            <person name="Andrews T.D."/>
            <person name="Caccamo M."/>
            <person name="Clamp M."/>
            <person name="Clarke L."/>
            <person name="Curwen V."/>
            <person name="Durbin R.M."/>
            <person name="Eyras E."/>
            <person name="Searle S.M."/>
            <person name="Cooper G.M."/>
            <person name="Batzoglou S."/>
            <person name="Brudno M."/>
            <person name="Sidow A."/>
            <person name="Stone E.A."/>
            <person name="Payseur B.A."/>
            <person name="Bourque G."/>
            <person name="Lopez-Otin C."/>
            <person name="Puente X.S."/>
            <person name="Chakrabarti K."/>
            <person name="Chatterji S."/>
            <person name="Dewey C."/>
            <person name="Pachter L."/>
            <person name="Bray N."/>
            <person name="Yap V.B."/>
            <person name="Caspi A."/>
            <person name="Tesler G."/>
            <person name="Pevzner P.A."/>
            <person name="Haussler D."/>
            <person name="Roskin K.M."/>
            <person name="Baertsch R."/>
            <person name="Clawson H."/>
            <person name="Furey T.S."/>
            <person name="Hinrichs A.S."/>
            <person name="Karolchik D."/>
            <person name="Kent W.J."/>
            <person name="Rosenbloom K.R."/>
            <person name="Trumbower H."/>
            <person name="Weirauch M."/>
            <person name="Cooper D.N."/>
            <person name="Stenson P.D."/>
            <person name="Ma B."/>
            <person name="Brent M."/>
            <person name="Arumugam M."/>
            <person name="Shteynberg D."/>
            <person name="Copley R.R."/>
            <person name="Taylor M.S."/>
            <person name="Riethman H."/>
            <person name="Mudunuri U."/>
            <person name="Peterson J."/>
            <person name="Guyer M."/>
            <person name="Felsenfeld A."/>
            <person name="Old S."/>
            <person name="Mockrin S."/>
            <person name="Collins F.S."/>
        </authorList>
    </citation>
    <scope>NUCLEOTIDE SEQUENCE [LARGE SCALE GENOMIC DNA]</scope>
    <source>
        <strain>Brown Norway</strain>
    </source>
</reference>
<reference key="2">
    <citation type="submission" date="2005-07" db="EMBL/GenBank/DDBJ databases">
        <authorList>
            <person name="Mural R.J."/>
            <person name="Li P.W."/>
            <person name="Adams M.D."/>
            <person name="Amanatides P.G."/>
            <person name="Baden-Tillson H."/>
            <person name="Barnstead M."/>
            <person name="Chin S.H."/>
            <person name="Dew I."/>
            <person name="Evans C.A."/>
            <person name="Ferriera S."/>
            <person name="Flanigan M."/>
            <person name="Fosler C."/>
            <person name="Glodek A."/>
            <person name="Gu Z."/>
            <person name="Holt R.A."/>
            <person name="Jennings D."/>
            <person name="Kraft C.L."/>
            <person name="Lu F."/>
            <person name="Nguyen T."/>
            <person name="Nusskern D.R."/>
            <person name="Pfannkoch C.M."/>
            <person name="Sitter C."/>
            <person name="Sutton G.G."/>
            <person name="Venter J.C."/>
            <person name="Wang Z."/>
            <person name="Woodage T."/>
            <person name="Zheng X.H."/>
            <person name="Zhong F."/>
        </authorList>
    </citation>
    <scope>NUCLEOTIDE SEQUENCE [LARGE SCALE GENOMIC DNA]</scope>
</reference>
<reference key="3">
    <citation type="journal article" date="2004" name="Genome Res.">
        <title>The status, quality, and expansion of the NIH full-length cDNA project: the Mammalian Gene Collection (MGC).</title>
        <authorList>
            <consortium name="The MGC Project Team"/>
        </authorList>
    </citation>
    <scope>NUCLEOTIDE SEQUENCE [LARGE SCALE MRNA]</scope>
    <source>
        <tissue>Liver</tissue>
    </source>
</reference>
<reference key="4">
    <citation type="journal article" date="2009" name="J. Biol. Chem.">
        <title>Mitochondrial glutamate carrier GC1 as a newly identified player in the control of glucose-stimulated insulin secretion.</title>
        <authorList>
            <person name="Casimir M."/>
            <person name="Lasorsa F.M."/>
            <person name="Rubi B."/>
            <person name="Caille D."/>
            <person name="Palmieri F."/>
            <person name="Meda P."/>
            <person name="Maechler P."/>
        </authorList>
    </citation>
    <scope>SUBCELLULAR LOCATION</scope>
    <scope>TISSUE SPECIFICITY</scope>
    <scope>FUNCTION</scope>
    <scope>TRANSPORTER ACTIVITY</scope>
</reference>
<organism>
    <name type="scientific">Rattus norvegicus</name>
    <name type="common">Rat</name>
    <dbReference type="NCBI Taxonomy" id="10116"/>
    <lineage>
        <taxon>Eukaryota</taxon>
        <taxon>Metazoa</taxon>
        <taxon>Chordata</taxon>
        <taxon>Craniata</taxon>
        <taxon>Vertebrata</taxon>
        <taxon>Euteleostomi</taxon>
        <taxon>Mammalia</taxon>
        <taxon>Eutheria</taxon>
        <taxon>Euarchontoglires</taxon>
        <taxon>Glires</taxon>
        <taxon>Rodentia</taxon>
        <taxon>Myomorpha</taxon>
        <taxon>Muroidea</taxon>
        <taxon>Muridae</taxon>
        <taxon>Murinae</taxon>
        <taxon>Rattus</taxon>
    </lineage>
</organism>
<name>GHC1_RAT</name>
<sequence>MADKQISLPAKLINGGIAGLIGVTCVFPIDLAKTRLQNQQNGQRMYASMSDCLIKTIRSEGYFGMYRGAAVNLTLVTPEKAIKLAANDFFRHQLSKDGQKLTLPKEMLAGCGAGTCQVIVTTPMEMLKIQLQDAGRIAAQRKMLAAQAQLATQGGGQPSVEAPAAPRPTATQLTRDLLRNHGIAGLYKGLGATLLRDVPFSIVYFPLFANLNQLGRPSSEEKSPFYVSFLAGCVAGSAAAVAVNPCDVVKTRLQSLERGVNEDTYSGFLDCARKIWRHEGPSAFLKGAYCRALVIAPLFGIAQVVYFLGIAESLLGLLQEPQA</sequence>
<protein>
    <recommendedName>
        <fullName>Mitochondrial glutamate carrier 1</fullName>
        <shortName>GC-1</shortName>
    </recommendedName>
    <alternativeName>
        <fullName>Glutamate/H(+) symporter 1</fullName>
    </alternativeName>
    <alternativeName>
        <fullName>Solute carrier family 25 member 22</fullName>
    </alternativeName>
</protein>
<keyword id="KW-0025">Alternative splicing</keyword>
<keyword id="KW-0472">Membrane</keyword>
<keyword id="KW-0496">Mitochondrion</keyword>
<keyword id="KW-0999">Mitochondrion inner membrane</keyword>
<keyword id="KW-1185">Reference proteome</keyword>
<keyword id="KW-0677">Repeat</keyword>
<keyword id="KW-0812">Transmembrane</keyword>
<keyword id="KW-1133">Transmembrane helix</keyword>
<keyword id="KW-0813">Transport</keyword>
<proteinExistence type="evidence at transcript level"/>
<dbReference type="EMBL" id="AABR07006025">
    <property type="status" value="NOT_ANNOTATED_CDS"/>
    <property type="molecule type" value="Genomic_DNA"/>
</dbReference>
<dbReference type="EMBL" id="AC109542">
    <property type="status" value="NOT_ANNOTATED_CDS"/>
    <property type="molecule type" value="Genomic_DNA"/>
</dbReference>
<dbReference type="EMBL" id="CH473953">
    <property type="protein sequence ID" value="EDM12050.1"/>
    <property type="molecule type" value="Genomic_DNA"/>
</dbReference>
<dbReference type="EMBL" id="CH473953">
    <property type="protein sequence ID" value="EDM12051.1"/>
    <property type="molecule type" value="Genomic_DNA"/>
</dbReference>
<dbReference type="EMBL" id="CH473953">
    <property type="protein sequence ID" value="EDM12052.1"/>
    <property type="molecule type" value="Genomic_DNA"/>
</dbReference>
<dbReference type="EMBL" id="BC090010">
    <property type="protein sequence ID" value="AAH90010.1"/>
    <property type="molecule type" value="mRNA"/>
</dbReference>
<dbReference type="RefSeq" id="NP_001014049.1">
    <molecule id="A0A0G2K5L2-2"/>
    <property type="nucleotide sequence ID" value="NM_001014027.1"/>
</dbReference>
<dbReference type="RefSeq" id="XP_008772957.1">
    <property type="nucleotide sequence ID" value="XM_008774735.2"/>
</dbReference>
<dbReference type="RefSeq" id="XP_008772958.1">
    <property type="nucleotide sequence ID" value="XM_008774736.2"/>
</dbReference>
<dbReference type="RefSeq" id="XP_008772959.1">
    <property type="nucleotide sequence ID" value="XM_008774737.2"/>
</dbReference>
<dbReference type="RefSeq" id="XP_008772960.1">
    <property type="nucleotide sequence ID" value="XM_008774738.2"/>
</dbReference>
<dbReference type="RefSeq" id="XP_017444722.1">
    <molecule id="A0A0G2K5L2-1"/>
    <property type="nucleotide sequence ID" value="XM_017589233.3"/>
</dbReference>
<dbReference type="RefSeq" id="XP_017445741.1">
    <property type="nucleotide sequence ID" value="XM_017590252.1"/>
</dbReference>
<dbReference type="RefSeq" id="XP_038934923.1">
    <molecule id="A0A0G2K5L2-1"/>
    <property type="nucleotide sequence ID" value="XM_039078995.2"/>
</dbReference>
<dbReference type="RefSeq" id="XP_038934932.1">
    <molecule id="A0A0G2K5L2-1"/>
    <property type="nucleotide sequence ID" value="XM_039079004.2"/>
</dbReference>
<dbReference type="RefSeq" id="XP_038934937.1">
    <molecule id="A0A0G2K5L2-1"/>
    <property type="nucleotide sequence ID" value="XM_039079009.2"/>
</dbReference>
<dbReference type="RefSeq" id="XP_038934944.1">
    <molecule id="A0A0G2K5L2-1"/>
    <property type="nucleotide sequence ID" value="XM_039079016.2"/>
</dbReference>
<dbReference type="RefSeq" id="XP_038934947.1">
    <molecule id="A0A0G2K5L2-1"/>
    <property type="nucleotide sequence ID" value="XM_039079019.2"/>
</dbReference>
<dbReference type="RefSeq" id="XP_063120094.1">
    <molecule id="A0A0G2K5L2-1"/>
    <property type="nucleotide sequence ID" value="XM_063264024.1"/>
</dbReference>
<dbReference type="RefSeq" id="XP_063120099.1">
    <molecule id="A0A0G2K5L2-1"/>
    <property type="nucleotide sequence ID" value="XM_063264029.1"/>
</dbReference>
<dbReference type="RefSeq" id="XP_063120116.1">
    <molecule id="A0A0G2K5L2-1"/>
    <property type="nucleotide sequence ID" value="XM_063264046.1"/>
</dbReference>
<dbReference type="RefSeq" id="XP_063120119.1">
    <molecule id="A0A0G2K5L2-1"/>
    <property type="nucleotide sequence ID" value="XM_063264049.1"/>
</dbReference>
<dbReference type="RefSeq" id="XP_063120126.1">
    <molecule id="A0A0G2K5L2-1"/>
    <property type="nucleotide sequence ID" value="XM_063264056.1"/>
</dbReference>
<dbReference type="RefSeq" id="XP_063120127.1">
    <molecule id="A0A0G2K5L2-1"/>
    <property type="nucleotide sequence ID" value="XM_063264057.1"/>
</dbReference>
<dbReference type="SMR" id="A0A0G2K5L2"/>
<dbReference type="FunCoup" id="A0A0G2K5L2">
    <property type="interactions" value="448"/>
</dbReference>
<dbReference type="IntAct" id="A0A0G2K5L2">
    <property type="interactions" value="1"/>
</dbReference>
<dbReference type="STRING" id="10116.ENSRNOP00000068705"/>
<dbReference type="PhosphoSitePlus" id="A0A0G2K5L2"/>
<dbReference type="jPOST" id="A0A0G2K5L2"/>
<dbReference type="PaxDb" id="10116-ENSRNOP00000025240"/>
<dbReference type="Ensembl" id="ENSRNOT00000054869.5">
    <molecule id="A0A0G2K5L2-2"/>
    <property type="protein sequence ID" value="ENSRNOP00000051753.2"/>
    <property type="gene ID" value="ENSRNOG00000049944.3"/>
</dbReference>
<dbReference type="Ensembl" id="ENSRNOT00000086238.2">
    <molecule id="A0A0G2K5L2-1"/>
    <property type="protein sequence ID" value="ENSRNOP00000073467.1"/>
    <property type="gene ID" value="ENSRNOG00000049944.3"/>
</dbReference>
<dbReference type="GeneID" id="309111"/>
<dbReference type="KEGG" id="rno:309111"/>
<dbReference type="AGR" id="RGD:1307826"/>
<dbReference type="CTD" id="79751"/>
<dbReference type="RGD" id="1307826">
    <property type="gene designation" value="Slc25a22"/>
</dbReference>
<dbReference type="eggNOG" id="KOG0750">
    <property type="taxonomic scope" value="Eukaryota"/>
</dbReference>
<dbReference type="GeneTree" id="ENSGT00940000161196"/>
<dbReference type="HOGENOM" id="CLU_015166_3_4_1"/>
<dbReference type="InParanoid" id="A0A0G2K5L2"/>
<dbReference type="OMA" id="QRLYTSM"/>
<dbReference type="OrthoDB" id="2382881at2759"/>
<dbReference type="TreeFam" id="TF313209"/>
<dbReference type="Reactome" id="R-RNO-428643">
    <property type="pathway name" value="Organic anion transporters"/>
</dbReference>
<dbReference type="Reactome" id="R-RNO-9856872">
    <property type="pathway name" value="Malate-aspartate shuttle"/>
</dbReference>
<dbReference type="PRO" id="PR:A0A0G2K5L2"/>
<dbReference type="Proteomes" id="UP000002494">
    <property type="component" value="Chromosome 1"/>
</dbReference>
<dbReference type="Proteomes" id="UP000234681">
    <property type="component" value="Chromosome 1"/>
</dbReference>
<dbReference type="Bgee" id="ENSRNOG00000018450">
    <property type="expression patterns" value="Expressed in liver and 18 other cell types or tissues"/>
</dbReference>
<dbReference type="ExpressionAtlas" id="A0A0G2K5L2">
    <property type="expression patterns" value="baseline and differential"/>
</dbReference>
<dbReference type="GO" id="GO:0005743">
    <property type="term" value="C:mitochondrial inner membrane"/>
    <property type="evidence" value="ECO:0000314"/>
    <property type="project" value="UniProtKB"/>
</dbReference>
<dbReference type="GO" id="GO:0005280">
    <property type="term" value="F:amino acid:proton symporter activity"/>
    <property type="evidence" value="ECO:0000266"/>
    <property type="project" value="RGD"/>
</dbReference>
<dbReference type="GO" id="GO:0015183">
    <property type="term" value="F:L-aspartate transmembrane transporter activity"/>
    <property type="evidence" value="ECO:0000318"/>
    <property type="project" value="GO_Central"/>
</dbReference>
<dbReference type="GO" id="GO:0005313">
    <property type="term" value="F:L-glutamate transmembrane transporter activity"/>
    <property type="evidence" value="ECO:0000315"/>
    <property type="project" value="UniProtKB"/>
</dbReference>
<dbReference type="GO" id="GO:0015810">
    <property type="term" value="P:aspartate transmembrane transport"/>
    <property type="evidence" value="ECO:0000318"/>
    <property type="project" value="GO_Central"/>
</dbReference>
<dbReference type="GO" id="GO:0015813">
    <property type="term" value="P:L-glutamate transmembrane transport"/>
    <property type="evidence" value="ECO:0000315"/>
    <property type="project" value="UniProtKB"/>
</dbReference>
<dbReference type="GO" id="GO:0043490">
    <property type="term" value="P:malate-aspartate shuttle"/>
    <property type="evidence" value="ECO:0000318"/>
    <property type="project" value="GO_Central"/>
</dbReference>
<dbReference type="GO" id="GO:0050796">
    <property type="term" value="P:regulation of insulin secretion"/>
    <property type="evidence" value="ECO:0000315"/>
    <property type="project" value="UniProtKB"/>
</dbReference>
<dbReference type="FunFam" id="1.50.40.10:FF:000017">
    <property type="entry name" value="Solute carrier family 25 member 22a"/>
    <property type="match status" value="1"/>
</dbReference>
<dbReference type="Gene3D" id="1.50.40.10">
    <property type="entry name" value="Mitochondrial carrier domain"/>
    <property type="match status" value="1"/>
</dbReference>
<dbReference type="InterPro" id="IPR002067">
    <property type="entry name" value="Mit_carrier"/>
</dbReference>
<dbReference type="InterPro" id="IPR051028">
    <property type="entry name" value="Mito_Solute_Carrier"/>
</dbReference>
<dbReference type="InterPro" id="IPR018108">
    <property type="entry name" value="Mitochondrial_sb/sol_carrier"/>
</dbReference>
<dbReference type="InterPro" id="IPR023395">
    <property type="entry name" value="Mt_carrier_dom_sf"/>
</dbReference>
<dbReference type="PANTHER" id="PTHR45678">
    <property type="entry name" value="MITOCHONDRIAL 2-OXODICARBOXYLATE CARRIER 1-RELATED"/>
    <property type="match status" value="1"/>
</dbReference>
<dbReference type="PANTHER" id="PTHR45678:SF3">
    <property type="entry name" value="MITOCHONDRIAL GLUTAMATE CARRIER 1"/>
    <property type="match status" value="1"/>
</dbReference>
<dbReference type="Pfam" id="PF00153">
    <property type="entry name" value="Mito_carr"/>
    <property type="match status" value="3"/>
</dbReference>
<dbReference type="PRINTS" id="PR00926">
    <property type="entry name" value="MITOCARRIER"/>
</dbReference>
<dbReference type="SUPFAM" id="SSF103506">
    <property type="entry name" value="Mitochondrial carrier"/>
    <property type="match status" value="1"/>
</dbReference>
<dbReference type="PROSITE" id="PS50920">
    <property type="entry name" value="SOLCAR"/>
    <property type="match status" value="3"/>
</dbReference>